<comment type="function">
    <text evidence="1">Involved in protein precursor import into chloroplasts. May be part of an intermediate translocation complex acting as a protein-conducting channel at the inner envelope.</text>
</comment>
<comment type="subunit">
    <text evidence="1">Part of the Tic complex.</text>
</comment>
<comment type="subcellular location">
    <subcellularLocation>
        <location evidence="1">Plastid</location>
        <location evidence="1">Chloroplast inner membrane</location>
        <topology evidence="2">Multi-pass membrane protein</topology>
    </subcellularLocation>
</comment>
<comment type="similarity">
    <text evidence="4">Belongs to the TIC214 family.</text>
</comment>
<protein>
    <recommendedName>
        <fullName evidence="1">Protein TIC 214</fullName>
    </recommendedName>
    <alternativeName>
        <fullName evidence="1">Translocon at the inner envelope membrane of chloroplasts 214</fullName>
        <shortName evidence="1">AtTIC214</shortName>
    </alternativeName>
</protein>
<sequence>MVNLVYVCMKINNSVVMVGLYYGFISAFSIGSSYLFLLRPRFLNDDPDAIEKKASETAGFFTGQLLIFISILYGPLHLALGRPHTILLLLAPYFFFHYLFSNSGQWPSQRFAFPLLTKSMRNRRFQLVFLNNLLFQLFSLSLLGRPMLTRLSYIYIFRCNNKMLFVLSSFVGWLIGHILVLKWAGLVFVWLLQVIRSKTMKYITCNVLIPATKYIIEKWRNSFVAGLIREILAMKQVESALVRIKNSKLLDDARWWIRGSSLISGLKINIRFYARLILRGFENVYVGAKFRQDMEHLFSIILFAIFLLYLDQTPLLYADPADKKLQLQRKLSNETQAARAEKKLEERLTKKFEAQRRAQRAAQRQALQEFKQGVVESYLAKQVAKDANQIQAQKDEKQIQAEQKARRIRAEQVVQYTFWLIEAQRREMEIEAARAMQEAYKGMLAAQEGYVEEGVQEKQEGFPEELISPSPIFHSEEREENPKLLILKEKISILKKKISILKKKISILKEKNDLFSFEIPIITSLFDPQKPLRPLRYIKTCAGVEKAVKNEMSQYFFYACRSDGKQRICFTYPPSLATFWEMIQRKMASRFPRIYAKAKWRALRWSAPGSYRQWISRNKKKKNSLSTEFQNRIKTLDKKKSLLNVLARRKRSSLLNVLARRKRSSLQNVLETRKRLCNYKTNKTKKEYLPEKEYLPEIADPFLTGALRGKSDPEVDDGGRKTSDLIKVVFLKNNITMATLRNKNDDDLREQKNAIALLSRMKNPVNKLHLLFVNERDYPFVKTLVNRINGPAVPKKKKKISKSKQKNVKSKQKNVKSKQKNVKSKQKNVKSKQNEIKRKVNEIKRKVNEIKRKQNESYPRGVKFGATPKTEINPHGIRFDAATIEKYSFATGYSYSPPSFDDILFHAFVTEPQRNKKAVIELEEEINKKVPRWSYQLIDELEQLEGAEGETQFSDHEIRILPFKRVAVFTEKDSKKRKPLIDEQGNFVRHRKTYAIRFLGHMSDFRRGLIKGSARQDRRKAYVCRTTQVNARSPLFALGPRTFLDGLVNLAVQVKFFYETRIKGEKIVDDDDDNEKDEFKVMIPDTKSIVAETREMLKQAGAEDGQSYEDVEDDIRIENVTEMWENIDYGQVIRTFILLLHIFLRKKVVFPAFIIGKNIARMLLLQATEWKIDFARLKRERYAICTYNGMKVSEKIAFDQFPPDWADDGIQILVTNPFYLKPWYRSKTRSIQKDPKKEKDPKKEKGPKKEPWYRFKTRFIQKDPKKEKGPKKEKGPKKEPWYRRFFFQKDPKKEKGPKKGKAQFEGDRGVRFLTSFGILTDRPFGDLITPDWGVFFNPIRNELKKKIRQFEKKHSIILSKRFRNVLKKTKKWFIKSFLFLKRARLKRHPIELSGGRETPEFTRSQKDIDNLKNEQDFRMSRNPRISESLLQGPVRALKDDSLPEEKVADPEKEPSDLDNELRAVWDEIDKVTKERKKIVFTPKPDSPDKLVQAKKNILKKLERIKSRRHKFYFLRIRKSYYVLLFFIKRISRNIKRIYLNPLERAISIRKIHPQRFFEFSKKMIEKSIGIGKTETNKETVYKTKKKKKKKNPFISIFKESLYDKDIRISENDIKLGDTWNGYKYKRKKATDTSDLASMSQAYVFYKLYQTQQTQLIHLDKLRYVLQYDGTSRFLKKELKDYFEAQELFHSKLKHKNSLNSGKNQWKNWLKAQHQYSVSPIIWNSLSPQKWRTKVNQERMDENTDLNKRYSNEKRKQFFEANSLDDEENVVETYLGQRAGDIKNSIKSYSYDLFSYQSINSEDKYVCINNKQKNSYNYNRRKVNLVDSPEGIALSNQFLVQNDLLDLYTFPDRKYVPWRLFPGSLIGGNDKDKDRFVKMWTATNSGNAVKYWTAANGNTSIKPGVFWTFQNSQRTKKQNPLFDWRGMNTELPNRCISDLKGWFFFSELLKLDLRYQVKPWILSKNLLFENLIFENQEENPNLIQNPIEDGRKNVIQNENENDPIEDGRQNVIQNENENAIQNLIDFFLEKKNSPKDTNQELHAQAKARIWDALVASLKQKREQKERKNKRIAQLIEKKKQKEIEKQKRKIEKQKRKKEKIENAKKKIENEKKKIETEEEKIEKEKRKKERKKEKLKKKVAKNIEKLKNKVAKNVAKNIEKLKKQRAKNIARMEEEDKKARKKRKRKVQVQENKIPYTAFGSDKWQRPIAEYPKSGDIRNFQVILPEDDDEDDEEDRLDELKLNAYELSRIQKITDEKRMKRNLLSSIKRERLKMEFSTRNNSLATIMLTHGIFSIEPLRISRQNQDASFLIYQLIKISLVEQLDPYDHNDSFELTEKYRARRNFFMPKTNAETMHKSDSDLFVPETILSTKRRRELRILISFYSRRGKRKNRIYKNPVFWKYVKNCGEVVDNSEKKKKKLIKSFLWPNYRLEDLACMNRYWFNAQNGSRFSMLRIRMYPRLKIR</sequence>
<proteinExistence type="inferred from homology"/>
<keyword id="KW-0150">Chloroplast</keyword>
<keyword id="KW-0175">Coiled coil</keyword>
<keyword id="KW-0472">Membrane</keyword>
<keyword id="KW-0934">Plastid</keyword>
<keyword id="KW-1001">Plastid inner membrane</keyword>
<keyword id="KW-0653">Protein transport</keyword>
<keyword id="KW-0812">Transmembrane</keyword>
<keyword id="KW-1133">Transmembrane helix</keyword>
<keyword id="KW-0813">Transport</keyword>
<feature type="chain" id="PRO_0000217305" description="Protein TIC 214">
    <location>
        <begin position="1"/>
        <end position="2463"/>
    </location>
</feature>
<feature type="transmembrane region" description="Helical" evidence="2">
    <location>
        <begin position="18"/>
        <end position="38"/>
    </location>
</feature>
<feature type="transmembrane region" description="Helical" evidence="2">
    <location>
        <begin position="60"/>
        <end position="80"/>
    </location>
</feature>
<feature type="transmembrane region" description="Helical" evidence="2">
    <location>
        <begin position="86"/>
        <end position="106"/>
    </location>
</feature>
<feature type="transmembrane region" description="Helical" evidence="2">
    <location>
        <begin position="127"/>
        <end position="147"/>
    </location>
</feature>
<feature type="transmembrane region" description="Helical" evidence="2">
    <location>
        <begin position="170"/>
        <end position="190"/>
    </location>
</feature>
<feature type="transmembrane region" description="Helical" evidence="2">
    <location>
        <begin position="297"/>
        <end position="317"/>
    </location>
</feature>
<feature type="region of interest" description="Disordered" evidence="3">
    <location>
        <begin position="792"/>
        <end position="841"/>
    </location>
</feature>
<feature type="region of interest" description="Disordered" evidence="3">
    <location>
        <begin position="1230"/>
        <end position="1249"/>
    </location>
</feature>
<feature type="region of interest" description="Disordered" evidence="3">
    <location>
        <begin position="1393"/>
        <end position="1417"/>
    </location>
</feature>
<feature type="region of interest" description="Disordered" evidence="3">
    <location>
        <begin position="2116"/>
        <end position="2136"/>
    </location>
</feature>
<feature type="region of interest" description="Disordered" evidence="3">
    <location>
        <begin position="2162"/>
        <end position="2187"/>
    </location>
</feature>
<feature type="coiled-coil region" evidence="2">
    <location>
        <begin position="326"/>
        <end position="441"/>
    </location>
</feature>
<feature type="coiled-coil region" evidence="2">
    <location>
        <begin position="2049"/>
        <end position="2192"/>
    </location>
</feature>
<feature type="compositionally biased region" description="Basic residues" evidence="3">
    <location>
        <begin position="794"/>
        <end position="830"/>
    </location>
</feature>
<feature type="compositionally biased region" description="Basic and acidic residues" evidence="3">
    <location>
        <begin position="832"/>
        <end position="841"/>
    </location>
</feature>
<feature type="compositionally biased region" description="Basic and acidic residues" evidence="3">
    <location>
        <begin position="1231"/>
        <end position="1249"/>
    </location>
</feature>
<feature type="compositionally biased region" description="Basic and acidic residues" evidence="3">
    <location>
        <begin position="1397"/>
        <end position="1417"/>
    </location>
</feature>
<feature type="compositionally biased region" description="Basic residues" evidence="3">
    <location>
        <begin position="2124"/>
        <end position="2136"/>
    </location>
</feature>
<evidence type="ECO:0000250" key="1">
    <source>
        <dbReference type="UniProtKB" id="P56785"/>
    </source>
</evidence>
<evidence type="ECO:0000255" key="2"/>
<evidence type="ECO:0000256" key="3">
    <source>
        <dbReference type="SAM" id="MobiDB-lite"/>
    </source>
</evidence>
<evidence type="ECO:0000305" key="4"/>
<gene>
    <name evidence="1" type="primary">TIC214</name>
    <name type="synonym">ycf1</name>
</gene>
<name>TI214_OENEH</name>
<geneLocation type="chloroplast"/>
<dbReference type="EMBL" id="AJ271079">
    <property type="protein sequence ID" value="CAB67227.3"/>
    <property type="molecule type" value="Genomic_DNA"/>
</dbReference>
<dbReference type="RefSeq" id="NP_084759.2">
    <property type="nucleotide sequence ID" value="NC_002693.2"/>
</dbReference>
<dbReference type="GeneID" id="802789"/>
<dbReference type="GO" id="GO:0009706">
    <property type="term" value="C:chloroplast inner membrane"/>
    <property type="evidence" value="ECO:0007669"/>
    <property type="project" value="UniProtKB-SubCell"/>
</dbReference>
<dbReference type="GO" id="GO:0015031">
    <property type="term" value="P:protein transport"/>
    <property type="evidence" value="ECO:0007669"/>
    <property type="project" value="UniProtKB-KW"/>
</dbReference>
<dbReference type="InterPro" id="IPR008896">
    <property type="entry name" value="TIC214"/>
</dbReference>
<dbReference type="PANTHER" id="PTHR33163:SF40">
    <property type="entry name" value="PROTEIN TIC 214"/>
    <property type="match status" value="1"/>
</dbReference>
<dbReference type="PANTHER" id="PTHR33163">
    <property type="entry name" value="PROTEIN TIC 214-RELATED"/>
    <property type="match status" value="1"/>
</dbReference>
<dbReference type="Pfam" id="PF05758">
    <property type="entry name" value="Ycf1"/>
    <property type="match status" value="3"/>
</dbReference>
<reference key="1">
    <citation type="journal article" date="2000" name="Mol. Gen. Genet.">
        <title>Complete nucleotide sequence of the Oenothera elata plastid chromosome, representing plastome I of the five distinguishable Euoenothera plastomes.</title>
        <authorList>
            <person name="Hupfer H."/>
            <person name="Swiatek M."/>
            <person name="Hornung S."/>
            <person name="Herrmann R.G."/>
            <person name="Maier R.M."/>
            <person name="Chiu W.-L."/>
            <person name="Sears B."/>
        </authorList>
    </citation>
    <scope>NUCLEOTIDE SEQUENCE [LARGE SCALE GENOMIC DNA]</scope>
    <source>
        <strain>cv. Johansen</strain>
    </source>
</reference>
<reference key="2">
    <citation type="journal article" date="2008" name="Nucleic Acids Res.">
        <title>The complete nucleotide sequences of the five genetically distinct plastid genomes of Oenothera, subsection Oenothera: I. Sequence evaluation and plastome evolution.</title>
        <authorList>
            <person name="Greiner S."/>
            <person name="Wang X."/>
            <person name="Rauwolf U."/>
            <person name="Silber M.V."/>
            <person name="Mayer K."/>
            <person name="Meurer J."/>
            <person name="Haberer G."/>
            <person name="Herrmann R.G."/>
        </authorList>
    </citation>
    <scope>SEQUENCE REVISION</scope>
</reference>
<accession>Q9MTH5</accession>
<organism>
    <name type="scientific">Oenothera elata subsp. hookeri</name>
    <name type="common">Hooker's evening primrose</name>
    <name type="synonym">Oenothera hookeri</name>
    <dbReference type="NCBI Taxonomy" id="85636"/>
    <lineage>
        <taxon>Eukaryota</taxon>
        <taxon>Viridiplantae</taxon>
        <taxon>Streptophyta</taxon>
        <taxon>Embryophyta</taxon>
        <taxon>Tracheophyta</taxon>
        <taxon>Spermatophyta</taxon>
        <taxon>Magnoliopsida</taxon>
        <taxon>eudicotyledons</taxon>
        <taxon>Gunneridae</taxon>
        <taxon>Pentapetalae</taxon>
        <taxon>rosids</taxon>
        <taxon>malvids</taxon>
        <taxon>Myrtales</taxon>
        <taxon>Onagraceae</taxon>
        <taxon>Onagroideae</taxon>
        <taxon>Onagreae</taxon>
        <taxon>Oenothera</taxon>
    </lineage>
</organism>